<organism>
    <name type="scientific">Arabidopsis thaliana</name>
    <name type="common">Mouse-ear cress</name>
    <dbReference type="NCBI Taxonomy" id="3702"/>
    <lineage>
        <taxon>Eukaryota</taxon>
        <taxon>Viridiplantae</taxon>
        <taxon>Streptophyta</taxon>
        <taxon>Embryophyta</taxon>
        <taxon>Tracheophyta</taxon>
        <taxon>Spermatophyta</taxon>
        <taxon>Magnoliopsida</taxon>
        <taxon>eudicotyledons</taxon>
        <taxon>Gunneridae</taxon>
        <taxon>Pentapetalae</taxon>
        <taxon>rosids</taxon>
        <taxon>malvids</taxon>
        <taxon>Brassicales</taxon>
        <taxon>Brassicaceae</taxon>
        <taxon>Camelineae</taxon>
        <taxon>Arabidopsis</taxon>
    </lineage>
</organism>
<protein>
    <recommendedName>
        <fullName evidence="7">Protein TIFY 8</fullName>
    </recommendedName>
</protein>
<gene>
    <name evidence="7" type="primary">TIFY8</name>
    <name evidence="9" type="ordered locus">At4g32570</name>
    <name evidence="10" type="ORF">F4D11.230</name>
</gene>
<comment type="function">
    <text evidence="2">Repressor of jasmonate responses.</text>
</comment>
<comment type="subunit">
    <text evidence="5 6">Interacts with AFPH2/NINJA.</text>
</comment>
<comment type="interaction">
    <interactant intactId="EBI-4426557">
        <id>Q84MB2</id>
    </interactant>
    <interactant intactId="EBI-1787005">
        <id>Q9SV55</id>
        <label>AFPH2</label>
    </interactant>
    <organismsDiffer>false</organismsDiffer>
    <experiments>6</experiments>
</comment>
<comment type="interaction">
    <interactant intactId="EBI-4426557">
        <id>Q84MB2</id>
    </interactant>
    <interactant intactId="EBI-25519787">
        <id>F4I8L6</id>
        <label>AGL67</label>
    </interactant>
    <organismsDiffer>false</organismsDiffer>
    <experiments>3</experiments>
</comment>
<comment type="interaction">
    <interactant intactId="EBI-4426557">
        <id>Q84MB2</id>
    </interactant>
    <interactant intactId="EBI-2363348">
        <id>Q9FLI3</id>
        <label>AHG1</label>
    </interactant>
    <organismsDiffer>false</organismsDiffer>
    <experiments>3</experiments>
</comment>
<comment type="interaction">
    <interactant intactId="EBI-4426557">
        <id>Q84MB2</id>
    </interactant>
    <interactant intactId="EBI-1100687">
        <id>Q9ZNV8</id>
        <label>AHP2</label>
    </interactant>
    <organismsDiffer>false</organismsDiffer>
    <experiments>3</experiments>
</comment>
<comment type="interaction">
    <interactant intactId="EBI-4426557">
        <id>Q84MB2</id>
    </interactant>
    <interactant intactId="EBI-4439253">
        <id>Q84VX3</id>
        <label>ALF4</label>
    </interactant>
    <organismsDiffer>false</organismsDiffer>
    <experiments>3</experiments>
</comment>
<comment type="interaction">
    <interactant intactId="EBI-4426557">
        <id>Q84MB2</id>
    </interactant>
    <interactant intactId="EBI-25519891">
        <id>F4I562</id>
        <label>AP3M</label>
    </interactant>
    <organismsDiffer>false</organismsDiffer>
    <experiments>3</experiments>
</comment>
<comment type="interaction">
    <interactant intactId="EBI-4426557">
        <id>Q84MB2</id>
    </interactant>
    <interactant intactId="EBI-2130714">
        <id>Q9STS3</id>
        <label>APC8</label>
    </interactant>
    <organismsDiffer>false</organismsDiffer>
    <experiments>3</experiments>
</comment>
<comment type="interaction">
    <interactant intactId="EBI-4426557">
        <id>Q84MB2</id>
    </interactant>
    <interactant intactId="EBI-1100737">
        <id>Q8L9Y3</id>
        <label>ARR14</label>
    </interactant>
    <organismsDiffer>false</organismsDiffer>
    <experiments>6</experiments>
</comment>
<comment type="interaction">
    <interactant intactId="EBI-4426557">
        <id>Q84MB2</id>
    </interactant>
    <interactant intactId="EBI-25517779">
        <id>Q29PY0</id>
        <label>At1g01225</label>
    </interactant>
    <organismsDiffer>false</organismsDiffer>
    <experiments>3</experiments>
</comment>
<comment type="interaction">
    <interactant intactId="EBI-4426557">
        <id>Q84MB2</id>
    </interactant>
    <interactant intactId="EBI-25519683">
        <id>A0A178W2W3</id>
        <label>At1g01630</label>
    </interactant>
    <organismsDiffer>false</organismsDiffer>
    <experiments>3</experiments>
</comment>
<comment type="interaction">
    <interactant intactId="EBI-4426557">
        <id>Q84MB2</id>
    </interactant>
    <interactant intactId="EBI-15194159">
        <id>Q501D3</id>
        <label>At1g01920</label>
    </interactant>
    <organismsDiffer>false</organismsDiffer>
    <experiments>3</experiments>
</comment>
<comment type="interaction">
    <interactant intactId="EBI-4426557">
        <id>Q84MB2</id>
    </interactant>
    <interactant intactId="EBI-4425726">
        <id>Q8VZE5</id>
        <label>At1g05410</label>
    </interactant>
    <organismsDiffer>false</organismsDiffer>
    <experiments>3</experiments>
</comment>
<comment type="interaction">
    <interactant intactId="EBI-4426557">
        <id>Q84MB2</id>
    </interactant>
    <interactant intactId="EBI-25517084">
        <id>A0A178WAA1</id>
        <label>At1g10650</label>
    </interactant>
    <organismsDiffer>false</organismsDiffer>
    <experiments>3</experiments>
</comment>
<comment type="interaction">
    <interactant intactId="EBI-4426557">
        <id>Q84MB2</id>
    </interactant>
    <interactant intactId="EBI-4433406">
        <id>Q9SA94</id>
        <label>At1g11810</label>
    </interactant>
    <organismsDiffer>false</organismsDiffer>
    <experiments>4</experiments>
</comment>
<comment type="interaction">
    <interactant intactId="EBI-4426557">
        <id>Q84MB2</id>
    </interactant>
    <interactant intactId="EBI-25518505">
        <id>F4I4I6</id>
        <label>At1g16705</label>
    </interactant>
    <organismsDiffer>false</organismsDiffer>
    <experiments>3</experiments>
</comment>
<comment type="interaction">
    <interactant intactId="EBI-4426557">
        <id>Q84MB2</id>
    </interactant>
    <interactant intactId="EBI-25516482">
        <id>A0A178WDD2</id>
        <label>At1g51580</label>
    </interactant>
    <organismsDiffer>false</organismsDiffer>
    <experiments>3</experiments>
</comment>
<comment type="interaction">
    <interactant intactId="EBI-4426557">
        <id>Q84MB2</id>
    </interactant>
    <interactant intactId="EBI-25518084">
        <id>Q8GZ67</id>
        <label>At1g68160/T22E19_21</label>
    </interactant>
    <organismsDiffer>false</organismsDiffer>
    <experiments>3</experiments>
</comment>
<comment type="interaction">
    <interactant intactId="EBI-4426557">
        <id>Q84MB2</id>
    </interactant>
    <interactant intactId="EBI-25519959">
        <id>A0A178W169</id>
        <label>At1g80720</label>
    </interactant>
    <organismsDiffer>false</organismsDiffer>
    <experiments>3</experiments>
</comment>
<comment type="interaction">
    <interactant intactId="EBI-4426557">
        <id>Q84MB2</id>
    </interactant>
    <interactant intactId="EBI-15195245">
        <id>Q9ZW36</id>
        <label>At2g29580</label>
    </interactant>
    <organismsDiffer>false</organismsDiffer>
    <experiments>3</experiments>
</comment>
<comment type="interaction">
    <interactant intactId="EBI-4426557">
        <id>Q84MB2</id>
    </interactant>
    <interactant intactId="EBI-21136550">
        <id>B3H7H1</id>
        <label>At3g07300</label>
    </interactant>
    <organismsDiffer>false</organismsDiffer>
    <experiments>3</experiments>
</comment>
<comment type="interaction">
    <interactant intactId="EBI-4426557">
        <id>Q84MB2</id>
    </interactant>
    <interactant intactId="EBI-25511202">
        <id>F4J010</id>
        <label>At3g15650</label>
    </interactant>
    <organismsDiffer>false</organismsDiffer>
    <experiments>4</experiments>
</comment>
<comment type="interaction">
    <interactant intactId="EBI-4426557">
        <id>Q84MB2</id>
    </interactant>
    <interactant intactId="EBI-25520004">
        <id>F4JCR3</id>
        <label>At3g47910</label>
    </interactant>
    <organismsDiffer>false</organismsDiffer>
    <experiments>3</experiments>
</comment>
<comment type="interaction">
    <interactant intactId="EBI-4426557">
        <id>Q84MB2</id>
    </interactant>
    <interactant intactId="EBI-25520212">
        <id>Q9SD33</id>
        <label>At3g51130</label>
    </interactant>
    <organismsDiffer>false</organismsDiffer>
    <experiments>3</experiments>
</comment>
<comment type="interaction">
    <interactant intactId="EBI-4426557">
        <id>Q84MB2</id>
    </interactant>
    <interactant intactId="EBI-25519982">
        <id>Q1ECQ5</id>
        <label>At4g02485</label>
    </interactant>
    <organismsDiffer>false</organismsDiffer>
    <experiments>3</experiments>
</comment>
<comment type="interaction">
    <interactant intactId="EBI-4426557">
        <id>Q84MB2</id>
    </interactant>
    <interactant intactId="EBI-25517233">
        <id>F4JJA3</id>
        <label>At4g09060</label>
    </interactant>
    <organismsDiffer>false</organismsDiffer>
    <experiments>3</experiments>
</comment>
<comment type="interaction">
    <interactant intactId="EBI-4426557">
        <id>Q84MB2</id>
    </interactant>
    <interactant intactId="EBI-25519661">
        <id>Q9SZ75</id>
        <label>At4g12100</label>
    </interactant>
    <organismsDiffer>false</organismsDiffer>
    <experiments>3</experiments>
</comment>
<comment type="interaction">
    <interactant intactId="EBI-4426557">
        <id>Q84MB2</id>
    </interactant>
    <interactant intactId="EBI-25510874">
        <id>Q84JD1</id>
        <label>At5g07260</label>
    </interactant>
    <organismsDiffer>false</organismsDiffer>
    <experiments>3</experiments>
</comment>
<comment type="interaction">
    <interactant intactId="EBI-4426557">
        <id>Q84MB2</id>
    </interactant>
    <interactant intactId="EBI-25519716">
        <id>P0C8R0</id>
        <label>At5g43820</label>
    </interactant>
    <organismsDiffer>false</organismsDiffer>
    <experiments>3</experiments>
</comment>
<comment type="interaction">
    <interactant intactId="EBI-4426557">
        <id>Q84MB2</id>
    </interactant>
    <interactant intactId="EBI-25517622">
        <id>Q6NNP0</id>
        <label>ATG16</label>
    </interactant>
    <organismsDiffer>false</organismsDiffer>
    <experiments>3</experiments>
</comment>
<comment type="interaction">
    <interactant intactId="EBI-4426557">
        <id>Q84MB2</id>
    </interactant>
    <interactant intactId="EBI-1536772">
        <id>O04292</id>
        <label>ATHB-9</label>
    </interactant>
    <organismsDiffer>false</organismsDiffer>
    <experiments>3</experiments>
</comment>
<comment type="interaction">
    <interactant intactId="EBI-4426557">
        <id>Q84MB2</id>
    </interactant>
    <interactant intactId="EBI-25516560">
        <id>Q9SSS9</id>
        <label>ATPD</label>
    </interactant>
    <organismsDiffer>false</organismsDiffer>
    <experiments>3</experiments>
</comment>
<comment type="interaction">
    <interactant intactId="EBI-4426557">
        <id>Q84MB2</id>
    </interactant>
    <interactant intactId="EBI-25520241">
        <id>Q8GYM3</id>
        <label>AUG4</label>
    </interactant>
    <organismsDiffer>false</organismsDiffer>
    <experiments>3</experiments>
</comment>
<comment type="interaction">
    <interactant intactId="EBI-4426557">
        <id>Q84MB2</id>
    </interactant>
    <interactant intactId="EBI-25520287">
        <id>A0A178VR60</id>
        <label>AXX17_At2g17160</label>
    </interactant>
    <organismsDiffer>false</organismsDiffer>
    <experiments>3</experiments>
</comment>
<comment type="interaction">
    <interactant intactId="EBI-4426557">
        <id>Q84MB2</id>
    </interactant>
    <interactant intactId="EBI-25517004">
        <id>A0A384L1W6</id>
        <label>AXX17_At3g01680</label>
    </interactant>
    <organismsDiffer>false</organismsDiffer>
    <experiments>3</experiments>
</comment>
<comment type="interaction">
    <interactant intactId="EBI-4426557">
        <id>Q84MB2</id>
    </interactant>
    <interactant intactId="EBI-25516796">
        <id>A0A384LH69</id>
        <label>AXX17_At3g52300</label>
    </interactant>
    <organismsDiffer>false</organismsDiffer>
    <experiments>3</experiments>
</comment>
<comment type="interaction">
    <interactant intactId="EBI-4426557">
        <id>Q84MB2</id>
    </interactant>
    <interactant intactId="EBI-25520271">
        <id>A0A178UA90</id>
        <label>AXX17_At5g21810</label>
    </interactant>
    <organismsDiffer>false</organismsDiffer>
    <experiments>3</experiments>
</comment>
<comment type="interaction">
    <interactant intactId="EBI-4426557">
        <id>Q84MB2</id>
    </interactant>
    <interactant intactId="EBI-1153797">
        <id>Q94KL5</id>
        <label>BLH4</label>
    </interactant>
    <organismsDiffer>false</organismsDiffer>
    <experiments>3</experiments>
</comment>
<comment type="interaction">
    <interactant intactId="EBI-4426557">
        <id>Q84MB2</id>
    </interactant>
    <interactant intactId="EBI-2025894">
        <id>Q8W4P1</id>
        <label>CDKC-2</label>
    </interactant>
    <organismsDiffer>false</organismsDiffer>
    <experiments>3</experiments>
</comment>
<comment type="interaction">
    <interactant intactId="EBI-4426557">
        <id>Q84MB2</id>
    </interactant>
    <interactant intactId="EBI-1253243">
        <id>P21238</id>
        <label>CPN60A1</label>
    </interactant>
    <organismsDiffer>false</organismsDiffer>
    <experiments>3</experiments>
</comment>
<comment type="interaction">
    <interactant intactId="EBI-4426557">
        <id>Q84MB2</id>
    </interactant>
    <interactant intactId="EBI-1773819">
        <id>O80513</id>
        <label>CYCU4-1</label>
    </interactant>
    <organismsDiffer>false</organismsDiffer>
    <experiments>5</experiments>
</comment>
<comment type="interaction">
    <interactant intactId="EBI-4426557">
        <id>Q84MB2</id>
    </interactant>
    <interactant intactId="EBI-25516637">
        <id>Q6NM52</id>
        <label>DL3925W</label>
    </interactant>
    <organismsDiffer>false</organismsDiffer>
    <experiments>3</experiments>
</comment>
<comment type="interaction">
    <interactant intactId="EBI-4426557">
        <id>Q84MB2</id>
    </interactant>
    <interactant intactId="EBI-4424427">
        <id>Q8L7G9</id>
        <label>DL4875C</label>
    </interactant>
    <organismsDiffer>false</organismsDiffer>
    <experiments>3</experiments>
</comment>
<comment type="interaction">
    <interactant intactId="EBI-4426557">
        <id>Q84MB2</id>
    </interactant>
    <interactant intactId="EBI-25520038">
        <id>O64688</id>
        <label>E1-BETA-2</label>
    </interactant>
    <organismsDiffer>false</organismsDiffer>
    <experiments>3</experiments>
</comment>
<comment type="interaction">
    <interactant intactId="EBI-4426557">
        <id>Q84MB2</id>
    </interactant>
    <interactant intactId="EBI-401198">
        <id>Q9SKK0</id>
        <label>EBF1</label>
    </interactant>
    <organismsDiffer>false</organismsDiffer>
    <experiments>5</experiments>
</comment>
<comment type="interaction">
    <interactant intactId="EBI-4426557">
        <id>Q84MB2</id>
    </interactant>
    <interactant intactId="EBI-4427894">
        <id>Q9SQU6</id>
        <label>EMB2750</label>
    </interactant>
    <organismsDiffer>false</organismsDiffer>
    <experiments>4</experiments>
</comment>
<comment type="interaction">
    <interactant intactId="EBI-4426557">
        <id>Q84MB2</id>
    </interactant>
    <interactant intactId="EBI-4470389">
        <id>Q8VY27</id>
        <label>EXO70H1</label>
    </interactant>
    <organismsDiffer>false</organismsDiffer>
    <experiments>3</experiments>
</comment>
<comment type="interaction">
    <interactant intactId="EBI-4426557">
        <id>Q84MB2</id>
    </interactant>
    <interactant intactId="EBI-25516131">
        <id>Q9FN91</id>
        <label>EXO70H7</label>
    </interactant>
    <organismsDiffer>false</organismsDiffer>
    <experiments>3</experiments>
</comment>
<comment type="interaction">
    <interactant intactId="EBI-4426557">
        <id>Q84MB2</id>
    </interactant>
    <interactant intactId="EBI-4426378">
        <id>Q39103</id>
        <label>GA3OX1</label>
    </interactant>
    <organismsDiffer>false</organismsDiffer>
    <experiments>3</experiments>
</comment>
<comment type="interaction">
    <interactant intactId="EBI-4426557">
        <id>Q84MB2</id>
    </interactant>
    <interactant intactId="EBI-532001">
        <id>Q9SMN1</id>
        <label>GAMMACAL2</label>
    </interactant>
    <organismsDiffer>false</organismsDiffer>
    <experiments>3</experiments>
</comment>
<comment type="interaction">
    <interactant intactId="EBI-4426557">
        <id>Q84MB2</id>
    </interactant>
    <interactant intactId="EBI-4458381">
        <id>O49653</id>
        <label>GCP2</label>
    </interactant>
    <organismsDiffer>false</organismsDiffer>
    <experiments>3</experiments>
</comment>
<comment type="interaction">
    <interactant intactId="EBI-4426557">
        <id>Q84MB2</id>
    </interactant>
    <interactant intactId="EBI-446380">
        <id>Q9SQI2</id>
        <label>GI</label>
    </interactant>
    <organismsDiffer>false</organismsDiffer>
    <experiments>3</experiments>
</comment>
<comment type="interaction">
    <interactant intactId="EBI-4426557">
        <id>Q84MB2</id>
    </interactant>
    <interactant intactId="EBI-4444060">
        <id>O82255</id>
        <label>GRXC13</label>
    </interactant>
    <organismsDiffer>false</organismsDiffer>
    <experiments>3</experiments>
</comment>
<comment type="interaction">
    <interactant intactId="EBI-4426557">
        <id>Q84MB2</id>
    </interactant>
    <interactant intactId="EBI-2257898">
        <id>Q96305</id>
        <label>GRXC7</label>
    </interactant>
    <organismsDiffer>false</organismsDiffer>
    <experiments>3</experiments>
</comment>
<comment type="interaction">
    <interactant intactId="EBI-4426557">
        <id>Q84MB2</id>
    </interactant>
    <interactant intactId="EBI-1545762">
        <id>Q9SGP6</id>
        <label>GRXC9</label>
    </interactant>
    <organismsDiffer>false</organismsDiffer>
    <experiments>3</experiments>
</comment>
<comment type="interaction">
    <interactant intactId="EBI-4426557">
        <id>Q84MB2</id>
    </interactant>
    <interactant intactId="EBI-632231">
        <id>O24407</id>
        <label>IAA16</label>
    </interactant>
    <organismsDiffer>false</organismsDiffer>
    <experiments>3</experiments>
</comment>
<comment type="interaction">
    <interactant intactId="EBI-4426557">
        <id>Q84MB2</id>
    </interactant>
    <interactant intactId="EBI-2295525">
        <id>O24408</id>
        <label>IAA18</label>
    </interactant>
    <organismsDiffer>false</organismsDiffer>
    <experiments>3</experiments>
</comment>
<comment type="interaction">
    <interactant intactId="EBI-4426557">
        <id>Q84MB2</id>
    </interactant>
    <interactant intactId="EBI-632257">
        <id>O24409</id>
        <label>IAA19</label>
    </interactant>
    <organismsDiffer>false</organismsDiffer>
    <experiments>3</experiments>
</comment>
<comment type="interaction">
    <interactant intactId="EBI-4426557">
        <id>Q84MB2</id>
    </interactant>
    <interactant intactId="EBI-632272">
        <id>O24410</id>
        <label>IAA20</label>
    </interactant>
    <organismsDiffer>false</organismsDiffer>
    <experiments>3</experiments>
</comment>
<comment type="interaction">
    <interactant intactId="EBI-4426557">
        <id>Q84MB2</id>
    </interactant>
    <interactant intactId="EBI-307174">
        <id>Q38822</id>
        <label>IAA3</label>
    </interactant>
    <organismsDiffer>false</organismsDiffer>
    <experiments>3</experiments>
</comment>
<comment type="interaction">
    <interactant intactId="EBI-4426557">
        <id>Q84MB2</id>
    </interactant>
    <interactant intactId="EBI-25519624">
        <id>F4ICB5</id>
        <label>IAP1</label>
    </interactant>
    <organismsDiffer>false</organismsDiffer>
    <experiments>3</experiments>
</comment>
<comment type="interaction">
    <interactant intactId="EBI-4426557">
        <id>Q84MB2</id>
    </interactant>
    <interactant intactId="EBI-25519488">
        <id>Q9SZU7</id>
        <label>KAI2</label>
    </interactant>
    <organismsDiffer>false</organismsDiffer>
    <experiments>3</experiments>
</comment>
<comment type="interaction">
    <interactant intactId="EBI-4426557">
        <id>Q84MB2</id>
    </interactant>
    <interactant intactId="EBI-530486">
        <id>P46639</id>
        <label>KNAT1</label>
    </interactant>
    <organismsDiffer>false</organismsDiffer>
    <experiments>5</experiments>
</comment>
<comment type="interaction">
    <interactant intactId="EBI-4426557">
        <id>Q84MB2</id>
    </interactant>
    <interactant intactId="EBI-25519598">
        <id>Q8H0W0</id>
        <label>LPA3</label>
    </interactant>
    <organismsDiffer>false</organismsDiffer>
    <experiments>3</experiments>
</comment>
<comment type="interaction">
    <interactant intactId="EBI-4426557">
        <id>Q84MB2</id>
    </interactant>
    <interactant intactId="EBI-4453099">
        <id>Q9LV27</id>
        <label>LST8-1</label>
    </interactant>
    <organismsDiffer>false</organismsDiffer>
    <experiments>4</experiments>
</comment>
<comment type="interaction">
    <interactant intactId="EBI-4426557">
        <id>Q84MB2</id>
    </interactant>
    <interactant intactId="EBI-4424076">
        <id>Q9FIR9</id>
        <label>LSU2</label>
    </interactant>
    <organismsDiffer>false</organismsDiffer>
    <experiments>3</experiments>
</comment>
<comment type="interaction">
    <interactant intactId="EBI-4426557">
        <id>Q84MB2</id>
    </interactant>
    <interactant intactId="EBI-4476287">
        <id>Q8GUP4</id>
        <label>MAJ23.70</label>
    </interactant>
    <organismsDiffer>false</organismsDiffer>
    <experiments>3</experiments>
</comment>
<comment type="interaction">
    <interactant intactId="EBI-4426557">
        <id>Q84MB2</id>
    </interactant>
    <interactant intactId="EBI-25520064">
        <id>F4JYP3</id>
        <label>MCA23.17</label>
    </interactant>
    <organismsDiffer>false</organismsDiffer>
    <experiments>3</experiments>
</comment>
<comment type="interaction">
    <interactant intactId="EBI-4426557">
        <id>Q84MB2</id>
    </interactant>
    <interactant intactId="EBI-15211238">
        <id>Q9FFJ9</id>
        <label>MJJ3.20</label>
    </interactant>
    <organismsDiffer>false</organismsDiffer>
    <experiments>3</experiments>
</comment>
<comment type="interaction">
    <interactant intactId="EBI-4426557">
        <id>Q84MB2</id>
    </interactant>
    <interactant intactId="EBI-2358409">
        <id>O80397</id>
        <label>MKK4</label>
    </interactant>
    <organismsDiffer>false</organismsDiffer>
    <experiments>6</experiments>
</comment>
<comment type="interaction">
    <interactant intactId="EBI-4426557">
        <id>Q84MB2</id>
    </interactant>
    <interactant intactId="EBI-2128593">
        <id>Q9LPQ3</id>
        <label>MKK7</label>
    </interactant>
    <organismsDiffer>false</organismsDiffer>
    <experiments>3</experiments>
</comment>
<comment type="interaction">
    <interactant intactId="EBI-4426557">
        <id>Q84MB2</id>
    </interactant>
    <interactant intactId="EBI-25520322">
        <id>Q8GUL2</id>
        <label>MOS14</label>
    </interactant>
    <organismsDiffer>false</organismsDiffer>
    <experiments>3</experiments>
</comment>
<comment type="interaction">
    <interactant intactId="EBI-4426557">
        <id>Q84MB2</id>
    </interactant>
    <interactant intactId="EBI-6395081">
        <id>Q9FMG6</id>
        <label>MSJ1.2</label>
    </interactant>
    <organismsDiffer>false</organismsDiffer>
    <experiments>3</experiments>
</comment>
<comment type="interaction">
    <interactant intactId="EBI-4426557">
        <id>Q84MB2</id>
    </interactant>
    <interactant intactId="EBI-1770573">
        <id>Q9FK59</id>
        <label>NCBP</label>
    </interactant>
    <organismsDiffer>false</organismsDiffer>
    <experiments>3</experiments>
</comment>
<comment type="interaction">
    <interactant intactId="EBI-4426557">
        <id>Q84MB2</id>
    </interactant>
    <interactant intactId="EBI-4451150">
        <id>P11035</id>
        <label>NIA2</label>
    </interactant>
    <organismsDiffer>false</organismsDiffer>
    <experiments>4</experiments>
</comment>
<comment type="interaction">
    <interactant intactId="EBI-4426557">
        <id>Q84MB2</id>
    </interactant>
    <interactant intactId="EBI-4429205">
        <id>Q9SJ96</id>
        <label>NRPB6B</label>
    </interactant>
    <organismsDiffer>false</organismsDiffer>
    <experiments>3</experiments>
</comment>
<comment type="interaction">
    <interactant intactId="EBI-4426557">
        <id>Q84MB2</id>
    </interactant>
    <interactant intactId="EBI-2130783">
        <id>Q6NLH0</id>
        <label>NRPB9A</label>
    </interactant>
    <organismsDiffer>false</organismsDiffer>
    <experiments>4</experiments>
</comment>
<comment type="interaction">
    <interactant intactId="EBI-4426557">
        <id>Q84MB2</id>
    </interactant>
    <interactant intactId="EBI-594372">
        <id>Q7DLR9</id>
        <label>PBG1</label>
    </interactant>
    <organismsDiffer>false</organismsDiffer>
    <experiments>3</experiments>
</comment>
<comment type="interaction">
    <interactant intactId="EBI-4426557">
        <id>Q84MB2</id>
    </interactant>
    <interactant intactId="EBI-9536794">
        <id>Q9XF57</id>
        <label>PEX7</label>
    </interactant>
    <organismsDiffer>false</organismsDiffer>
    <experiments>3</experiments>
</comment>
<comment type="interaction">
    <interactant intactId="EBI-4426557">
        <id>Q84MB2</id>
    </interactant>
    <interactant intactId="EBI-1998055">
        <id>Q1H5E9</id>
        <label>PRDA1</label>
    </interactant>
    <organismsDiffer>false</organismsDiffer>
    <experiments>3</experiments>
</comment>
<comment type="interaction">
    <interactant intactId="EBI-4426557">
        <id>Q84MB2</id>
    </interactant>
    <interactant intactId="EBI-7890412">
        <id>Q9XI19</id>
        <label>PTAC6</label>
    </interactant>
    <organismsDiffer>false</organismsDiffer>
    <experiments>3</experiments>
</comment>
<comment type="interaction">
    <interactant intactId="EBI-4426557">
        <id>Q84MB2</id>
    </interactant>
    <interactant intactId="EBI-4434802">
        <id>Q8VZ40</id>
        <label>PUB14</label>
    </interactant>
    <organismsDiffer>false</organismsDiffer>
    <experiments>3</experiments>
</comment>
<comment type="interaction">
    <interactant intactId="EBI-4426557">
        <id>Q84MB2</id>
    </interactant>
    <interactant intactId="EBI-25519743">
        <id>Q94A51</id>
        <label>PUB32</label>
    </interactant>
    <organismsDiffer>false</organismsDiffer>
    <experiments>3</experiments>
</comment>
<comment type="interaction">
    <interactant intactId="EBI-4426557">
        <id>Q84MB2</id>
    </interactant>
    <interactant intactId="EBI-2363192">
        <id>Q8S8E3</id>
        <label>PYL6</label>
    </interactant>
    <organismsDiffer>false</organismsDiffer>
    <experiments>3</experiments>
</comment>
<comment type="interaction">
    <interactant intactId="EBI-4426557">
        <id>Q84MB2</id>
    </interactant>
    <interactant intactId="EBI-2429535">
        <id>Q9FGM1</id>
        <label>PYL8</label>
    </interactant>
    <organismsDiffer>false</organismsDiffer>
    <experiments>3</experiments>
</comment>
<comment type="interaction">
    <interactant intactId="EBI-4426557">
        <id>Q84MB2</id>
    </interactant>
    <interactant intactId="EBI-2349513">
        <id>Q84MC7</id>
        <label>PYL9</label>
    </interactant>
    <organismsDiffer>false</organismsDiffer>
    <experiments>3</experiments>
</comment>
<comment type="interaction">
    <interactant intactId="EBI-4426557">
        <id>Q84MB2</id>
    </interactant>
    <interactant intactId="EBI-1541681">
        <id>P10795</id>
        <label>RBCS-1A</label>
    </interactant>
    <organismsDiffer>false</organismsDiffer>
    <experiments>3</experiments>
</comment>
<comment type="interaction">
    <interactant intactId="EBI-4426557">
        <id>Q84MB2</id>
    </interactant>
    <interactant intactId="EBI-639640">
        <id>P10798</id>
        <label>RBCS-3B</label>
    </interactant>
    <organismsDiffer>false</organismsDiffer>
    <experiments>3</experiments>
</comment>
<comment type="interaction">
    <interactant intactId="EBI-4426557">
        <id>Q84MB2</id>
    </interactant>
    <interactant intactId="EBI-3134035">
        <id>Q9SE43</id>
        <label>REV</label>
    </interactant>
    <organismsDiffer>false</organismsDiffer>
    <experiments>3</experiments>
</comment>
<comment type="interaction">
    <interactant intactId="EBI-4426557">
        <id>Q84MB2</id>
    </interactant>
    <interactant intactId="EBI-1238472">
        <id>Q9S7H5</id>
        <label>SCL21</label>
    </interactant>
    <organismsDiffer>false</organismsDiffer>
    <experiments>4</experiments>
</comment>
<comment type="interaction">
    <interactant intactId="EBI-4426557">
        <id>Q84MB2</id>
    </interactant>
    <interactant intactId="EBI-1238460">
        <id>Q9FHZ1</id>
        <label>SCL23</label>
    </interactant>
    <organismsDiffer>false</organismsDiffer>
    <experiments>8</experiments>
</comment>
<comment type="interaction">
    <interactant intactId="EBI-4426557">
        <id>Q84MB2</id>
    </interactant>
    <interactant intactId="EBI-4426966">
        <id>Q9M8Y0</id>
        <label>SEC</label>
    </interactant>
    <organismsDiffer>false</organismsDiffer>
    <experiments>3</experiments>
</comment>
<comment type="interaction">
    <interactant intactId="EBI-4426557">
        <id>Q84MB2</id>
    </interactant>
    <interactant intactId="EBI-9160890">
        <id>Q8L7W0</id>
        <label>SH3P3</label>
    </interactant>
    <organismsDiffer>false</organismsDiffer>
    <experiments>3</experiments>
</comment>
<comment type="interaction">
    <interactant intactId="EBI-4426557">
        <id>Q84MB2</id>
    </interactant>
    <interactant intactId="EBI-604645">
        <id>Q9M1Y3</id>
        <label>SKIP35</label>
    </interactant>
    <organismsDiffer>false</organismsDiffer>
    <experiments>3</experiments>
</comment>
<comment type="interaction">
    <interactant intactId="EBI-4426557">
        <id>Q84MB2</id>
    </interactant>
    <interactant intactId="EBI-1635572">
        <id>Q9C5Z3</id>
        <label>TIF3E1</label>
    </interactant>
    <organismsDiffer>false</organismsDiffer>
    <experiments>3</experiments>
</comment>
<comment type="interaction">
    <interactant intactId="EBI-4426557">
        <id>Q84MB2</id>
    </interactant>
    <interactant intactId="EBI-15199673">
        <id>Q7XA73</id>
        <label>TIFY4A</label>
    </interactant>
    <organismsDiffer>false</organismsDiffer>
    <experiments>5</experiments>
</comment>
<comment type="interaction">
    <interactant intactId="EBI-4426557">
        <id>Q84MB2</id>
    </interactant>
    <interactant intactId="EBI-15206004">
        <id>Q8GY55</id>
        <label>TIFY4B</label>
    </interactant>
    <organismsDiffer>false</organismsDiffer>
    <experiments>3</experiments>
</comment>
<comment type="interaction">
    <interactant intactId="EBI-4426557">
        <id>Q84MB2</id>
    </interactant>
    <interactant intactId="EBI-1792431">
        <id>Q9LVI4</id>
        <label>TIFY6B</label>
    </interactant>
    <organismsDiffer>false</organismsDiffer>
    <experiments>3</experiments>
</comment>
<comment type="interaction">
    <interactant intactId="EBI-4426557">
        <id>Q84MB2</id>
    </interactant>
    <interactant intactId="EBI-25520180">
        <id>Q9LJI5</id>
        <label>VHA-d1</label>
    </interactant>
    <organismsDiffer>false</organismsDiffer>
    <experiments>3</experiments>
</comment>
<comment type="interaction">
    <interactant intactId="EBI-4426557">
        <id>Q84MB2</id>
    </interactant>
    <interactant intactId="EBI-3865310">
        <id>O65421</id>
        <label>VPS28-1</label>
    </interactant>
    <organismsDiffer>false</organismsDiffer>
    <experiments>3</experiments>
</comment>
<comment type="interaction">
    <interactant intactId="EBI-4426557">
        <id>Q84MB2</id>
    </interactant>
    <interactant intactId="EBI-25520077">
        <id>Q9FE62</id>
        <label>YLS8</label>
    </interactant>
    <organismsDiffer>false</organismsDiffer>
    <experiments>3</experiments>
</comment>
<comment type="subcellular location">
    <subcellularLocation>
        <location evidence="8">Nucleus</location>
    </subcellularLocation>
</comment>
<comment type="PTM">
    <text evidence="1">Ubiquitinated. Targeted for degradation by the SCF(COI1) E3 ubiquitin ligase-proteasome pathway during jasmonate signaling.</text>
</comment>
<comment type="similarity">
    <text evidence="8">Belongs to the TIFY/JAZ family.</text>
</comment>
<comment type="sequence caution" evidence="8">
    <conflict type="erroneous initiation">
        <sequence resource="EMBL-CDS" id="AAM63435"/>
    </conflict>
    <text>Truncated N-terminus.</text>
</comment>
<comment type="sequence caution" evidence="8">
    <conflict type="erroneous gene model prediction">
        <sequence resource="EMBL-CDS" id="CAA18604"/>
    </conflict>
</comment>
<comment type="sequence caution" evidence="8">
    <conflict type="erroneous gene model prediction">
        <sequence resource="EMBL-CDS" id="CAB79974"/>
    </conflict>
</comment>
<evidence type="ECO:0000250" key="1">
    <source>
        <dbReference type="UniProtKB" id="Q7XPM8"/>
    </source>
</evidence>
<evidence type="ECO:0000250" key="2">
    <source>
        <dbReference type="UniProtKB" id="Q9M246"/>
    </source>
</evidence>
<evidence type="ECO:0000255" key="3">
    <source>
        <dbReference type="PROSITE-ProRule" id="PRU00650"/>
    </source>
</evidence>
<evidence type="ECO:0000256" key="4">
    <source>
        <dbReference type="SAM" id="MobiDB-lite"/>
    </source>
</evidence>
<evidence type="ECO:0000269" key="5">
    <source>
    </source>
</evidence>
<evidence type="ECO:0000269" key="6">
    <source>
    </source>
</evidence>
<evidence type="ECO:0000303" key="7">
    <source>
    </source>
</evidence>
<evidence type="ECO:0000305" key="8"/>
<evidence type="ECO:0000312" key="9">
    <source>
        <dbReference type="Araport" id="AT4G32570"/>
    </source>
</evidence>
<evidence type="ECO:0000312" key="10">
    <source>
        <dbReference type="EMBL" id="CAA18604.1"/>
    </source>
</evidence>
<dbReference type="EMBL" id="AL022537">
    <property type="protein sequence ID" value="CAA18604.1"/>
    <property type="status" value="ALT_SEQ"/>
    <property type="molecule type" value="Genomic_DNA"/>
</dbReference>
<dbReference type="EMBL" id="AL161581">
    <property type="protein sequence ID" value="CAB79974.1"/>
    <property type="status" value="ALT_SEQ"/>
    <property type="molecule type" value="Genomic_DNA"/>
</dbReference>
<dbReference type="EMBL" id="CP002687">
    <property type="protein sequence ID" value="AEE86081.1"/>
    <property type="molecule type" value="Genomic_DNA"/>
</dbReference>
<dbReference type="EMBL" id="BT006431">
    <property type="protein sequence ID" value="AAP21239.1"/>
    <property type="molecule type" value="mRNA"/>
</dbReference>
<dbReference type="EMBL" id="AY086431">
    <property type="protein sequence ID" value="AAM63435.1"/>
    <property type="status" value="ALT_INIT"/>
    <property type="molecule type" value="mRNA"/>
</dbReference>
<dbReference type="PIR" id="T04469">
    <property type="entry name" value="T04469"/>
</dbReference>
<dbReference type="RefSeq" id="NP_567898.1">
    <property type="nucleotide sequence ID" value="NM_119409.4"/>
</dbReference>
<dbReference type="BioGRID" id="14678">
    <property type="interactions" value="161"/>
</dbReference>
<dbReference type="DIP" id="DIP-58591N"/>
<dbReference type="FunCoup" id="Q84MB2">
    <property type="interactions" value="350"/>
</dbReference>
<dbReference type="IntAct" id="Q84MB2">
    <property type="interactions" value="146"/>
</dbReference>
<dbReference type="STRING" id="3702.Q84MB2"/>
<dbReference type="PaxDb" id="3702-AT4G32570.1"/>
<dbReference type="ProteomicsDB" id="234448"/>
<dbReference type="EnsemblPlants" id="AT4G32570.1">
    <property type="protein sequence ID" value="AT4G32570.1"/>
    <property type="gene ID" value="AT4G32570"/>
</dbReference>
<dbReference type="GeneID" id="829392"/>
<dbReference type="Gramene" id="AT4G32570.1">
    <property type="protein sequence ID" value="AT4G32570.1"/>
    <property type="gene ID" value="AT4G32570"/>
</dbReference>
<dbReference type="KEGG" id="ath:AT4G32570"/>
<dbReference type="Araport" id="AT4G32570"/>
<dbReference type="TAIR" id="AT4G32570">
    <property type="gene designation" value="TIFY8"/>
</dbReference>
<dbReference type="eggNOG" id="ENOG502QREB">
    <property type="taxonomic scope" value="Eukaryota"/>
</dbReference>
<dbReference type="HOGENOM" id="CLU_038646_0_0_1"/>
<dbReference type="InParanoid" id="Q84MB2"/>
<dbReference type="OrthoDB" id="1908882at2759"/>
<dbReference type="PhylomeDB" id="Q84MB2"/>
<dbReference type="PRO" id="PR:Q84MB2"/>
<dbReference type="Proteomes" id="UP000006548">
    <property type="component" value="Chromosome 4"/>
</dbReference>
<dbReference type="ExpressionAtlas" id="Q84MB2">
    <property type="expression patterns" value="baseline and differential"/>
</dbReference>
<dbReference type="GO" id="GO:0005634">
    <property type="term" value="C:nucleus"/>
    <property type="evidence" value="ECO:0007669"/>
    <property type="project" value="UniProtKB-SubCell"/>
</dbReference>
<dbReference type="InterPro" id="IPR040390">
    <property type="entry name" value="TIFY/JAZ"/>
</dbReference>
<dbReference type="InterPro" id="IPR010399">
    <property type="entry name" value="Tify_dom"/>
</dbReference>
<dbReference type="PANTHER" id="PTHR33077">
    <property type="entry name" value="PROTEIN TIFY 4A-RELATED-RELATED"/>
    <property type="match status" value="1"/>
</dbReference>
<dbReference type="PANTHER" id="PTHR33077:SF8">
    <property type="entry name" value="PROTEIN TIFY 8"/>
    <property type="match status" value="1"/>
</dbReference>
<dbReference type="Pfam" id="PF06200">
    <property type="entry name" value="tify"/>
    <property type="match status" value="1"/>
</dbReference>
<dbReference type="SMART" id="SM00979">
    <property type="entry name" value="TIFY"/>
    <property type="match status" value="1"/>
</dbReference>
<dbReference type="PROSITE" id="PS51320">
    <property type="entry name" value="TIFY"/>
    <property type="match status" value="1"/>
</dbReference>
<reference key="1">
    <citation type="journal article" date="1999" name="Nature">
        <title>Sequence and analysis of chromosome 4 of the plant Arabidopsis thaliana.</title>
        <authorList>
            <person name="Mayer K.F.X."/>
            <person name="Schueller C."/>
            <person name="Wambutt R."/>
            <person name="Murphy G."/>
            <person name="Volckaert G."/>
            <person name="Pohl T."/>
            <person name="Duesterhoeft A."/>
            <person name="Stiekema W."/>
            <person name="Entian K.-D."/>
            <person name="Terryn N."/>
            <person name="Harris B."/>
            <person name="Ansorge W."/>
            <person name="Brandt P."/>
            <person name="Grivell L.A."/>
            <person name="Rieger M."/>
            <person name="Weichselgartner M."/>
            <person name="de Simone V."/>
            <person name="Obermaier B."/>
            <person name="Mache R."/>
            <person name="Mueller M."/>
            <person name="Kreis M."/>
            <person name="Delseny M."/>
            <person name="Puigdomenech P."/>
            <person name="Watson M."/>
            <person name="Schmidtheini T."/>
            <person name="Reichert B."/>
            <person name="Portetelle D."/>
            <person name="Perez-Alonso M."/>
            <person name="Boutry M."/>
            <person name="Bancroft I."/>
            <person name="Vos P."/>
            <person name="Hoheisel J."/>
            <person name="Zimmermann W."/>
            <person name="Wedler H."/>
            <person name="Ridley P."/>
            <person name="Langham S.-A."/>
            <person name="McCullagh B."/>
            <person name="Bilham L."/>
            <person name="Robben J."/>
            <person name="van der Schueren J."/>
            <person name="Grymonprez B."/>
            <person name="Chuang Y.-J."/>
            <person name="Vandenbussche F."/>
            <person name="Braeken M."/>
            <person name="Weltjens I."/>
            <person name="Voet M."/>
            <person name="Bastiaens I."/>
            <person name="Aert R."/>
            <person name="Defoor E."/>
            <person name="Weitzenegger T."/>
            <person name="Bothe G."/>
            <person name="Ramsperger U."/>
            <person name="Hilbert H."/>
            <person name="Braun M."/>
            <person name="Holzer E."/>
            <person name="Brandt A."/>
            <person name="Peters S."/>
            <person name="van Staveren M."/>
            <person name="Dirkse W."/>
            <person name="Mooijman P."/>
            <person name="Klein Lankhorst R."/>
            <person name="Rose M."/>
            <person name="Hauf J."/>
            <person name="Koetter P."/>
            <person name="Berneiser S."/>
            <person name="Hempel S."/>
            <person name="Feldpausch M."/>
            <person name="Lamberth S."/>
            <person name="Van den Daele H."/>
            <person name="De Keyser A."/>
            <person name="Buysshaert C."/>
            <person name="Gielen J."/>
            <person name="Villarroel R."/>
            <person name="De Clercq R."/>
            <person name="van Montagu M."/>
            <person name="Rogers J."/>
            <person name="Cronin A."/>
            <person name="Quail M.A."/>
            <person name="Bray-Allen S."/>
            <person name="Clark L."/>
            <person name="Doggett J."/>
            <person name="Hall S."/>
            <person name="Kay M."/>
            <person name="Lennard N."/>
            <person name="McLay K."/>
            <person name="Mayes R."/>
            <person name="Pettett A."/>
            <person name="Rajandream M.A."/>
            <person name="Lyne M."/>
            <person name="Benes V."/>
            <person name="Rechmann S."/>
            <person name="Borkova D."/>
            <person name="Bloecker H."/>
            <person name="Scharfe M."/>
            <person name="Grimm M."/>
            <person name="Loehnert T.-H."/>
            <person name="Dose S."/>
            <person name="de Haan M."/>
            <person name="Maarse A.C."/>
            <person name="Schaefer M."/>
            <person name="Mueller-Auer S."/>
            <person name="Gabel C."/>
            <person name="Fuchs M."/>
            <person name="Fartmann B."/>
            <person name="Granderath K."/>
            <person name="Dauner D."/>
            <person name="Herzl A."/>
            <person name="Neumann S."/>
            <person name="Argiriou A."/>
            <person name="Vitale D."/>
            <person name="Liguori R."/>
            <person name="Piravandi E."/>
            <person name="Massenet O."/>
            <person name="Quigley F."/>
            <person name="Clabauld G."/>
            <person name="Muendlein A."/>
            <person name="Felber R."/>
            <person name="Schnabl S."/>
            <person name="Hiller R."/>
            <person name="Schmidt W."/>
            <person name="Lecharny A."/>
            <person name="Aubourg S."/>
            <person name="Chefdor F."/>
            <person name="Cooke R."/>
            <person name="Berger C."/>
            <person name="Monfort A."/>
            <person name="Casacuberta E."/>
            <person name="Gibbons T."/>
            <person name="Weber N."/>
            <person name="Vandenbol M."/>
            <person name="Bargues M."/>
            <person name="Terol J."/>
            <person name="Torres A."/>
            <person name="Perez-Perez A."/>
            <person name="Purnelle B."/>
            <person name="Bent E."/>
            <person name="Johnson S."/>
            <person name="Tacon D."/>
            <person name="Jesse T."/>
            <person name="Heijnen L."/>
            <person name="Schwarz S."/>
            <person name="Scholler P."/>
            <person name="Heber S."/>
            <person name="Francs P."/>
            <person name="Bielke C."/>
            <person name="Frishman D."/>
            <person name="Haase D."/>
            <person name="Lemcke K."/>
            <person name="Mewes H.-W."/>
            <person name="Stocker S."/>
            <person name="Zaccaria P."/>
            <person name="Bevan M."/>
            <person name="Wilson R.K."/>
            <person name="de la Bastide M."/>
            <person name="Habermann K."/>
            <person name="Parnell L."/>
            <person name="Dedhia N."/>
            <person name="Gnoj L."/>
            <person name="Schutz K."/>
            <person name="Huang E."/>
            <person name="Spiegel L."/>
            <person name="Sekhon M."/>
            <person name="Murray J."/>
            <person name="Sheet P."/>
            <person name="Cordes M."/>
            <person name="Abu-Threideh J."/>
            <person name="Stoneking T."/>
            <person name="Kalicki J."/>
            <person name="Graves T."/>
            <person name="Harmon G."/>
            <person name="Edwards J."/>
            <person name="Latreille P."/>
            <person name="Courtney L."/>
            <person name="Cloud J."/>
            <person name="Abbott A."/>
            <person name="Scott K."/>
            <person name="Johnson D."/>
            <person name="Minx P."/>
            <person name="Bentley D."/>
            <person name="Fulton B."/>
            <person name="Miller N."/>
            <person name="Greco T."/>
            <person name="Kemp K."/>
            <person name="Kramer J."/>
            <person name="Fulton L."/>
            <person name="Mardis E."/>
            <person name="Dante M."/>
            <person name="Pepin K."/>
            <person name="Hillier L.W."/>
            <person name="Nelson J."/>
            <person name="Spieth J."/>
            <person name="Ryan E."/>
            <person name="Andrews S."/>
            <person name="Geisel C."/>
            <person name="Layman D."/>
            <person name="Du H."/>
            <person name="Ali J."/>
            <person name="Berghoff A."/>
            <person name="Jones K."/>
            <person name="Drone K."/>
            <person name="Cotton M."/>
            <person name="Joshu C."/>
            <person name="Antonoiu B."/>
            <person name="Zidanic M."/>
            <person name="Strong C."/>
            <person name="Sun H."/>
            <person name="Lamar B."/>
            <person name="Yordan C."/>
            <person name="Ma P."/>
            <person name="Zhong J."/>
            <person name="Preston R."/>
            <person name="Vil D."/>
            <person name="Shekher M."/>
            <person name="Matero A."/>
            <person name="Shah R."/>
            <person name="Swaby I.K."/>
            <person name="O'Shaughnessy A."/>
            <person name="Rodriguez M."/>
            <person name="Hoffman J."/>
            <person name="Till S."/>
            <person name="Granat S."/>
            <person name="Shohdy N."/>
            <person name="Hasegawa A."/>
            <person name="Hameed A."/>
            <person name="Lodhi M."/>
            <person name="Johnson A."/>
            <person name="Chen E."/>
            <person name="Marra M.A."/>
            <person name="Martienssen R."/>
            <person name="McCombie W.R."/>
        </authorList>
    </citation>
    <scope>NUCLEOTIDE SEQUENCE [LARGE SCALE GENOMIC DNA]</scope>
    <source>
        <strain>cv. Columbia</strain>
    </source>
</reference>
<reference key="2">
    <citation type="journal article" date="2017" name="Plant J.">
        <title>Araport11: a complete reannotation of the Arabidopsis thaliana reference genome.</title>
        <authorList>
            <person name="Cheng C.Y."/>
            <person name="Krishnakumar V."/>
            <person name="Chan A.P."/>
            <person name="Thibaud-Nissen F."/>
            <person name="Schobel S."/>
            <person name="Town C.D."/>
        </authorList>
    </citation>
    <scope>GENOME REANNOTATION</scope>
    <source>
        <strain>cv. Columbia</strain>
    </source>
</reference>
<reference key="3">
    <citation type="journal article" date="2003" name="Science">
        <title>Empirical analysis of transcriptional activity in the Arabidopsis genome.</title>
        <authorList>
            <person name="Yamada K."/>
            <person name="Lim J."/>
            <person name="Dale J.M."/>
            <person name="Chen H."/>
            <person name="Shinn P."/>
            <person name="Palm C.J."/>
            <person name="Southwick A.M."/>
            <person name="Wu H.C."/>
            <person name="Kim C.J."/>
            <person name="Nguyen M."/>
            <person name="Pham P.K."/>
            <person name="Cheuk R.F."/>
            <person name="Karlin-Newmann G."/>
            <person name="Liu S.X."/>
            <person name="Lam B."/>
            <person name="Sakano H."/>
            <person name="Wu T."/>
            <person name="Yu G."/>
            <person name="Miranda M."/>
            <person name="Quach H.L."/>
            <person name="Tripp M."/>
            <person name="Chang C.H."/>
            <person name="Lee J.M."/>
            <person name="Toriumi M.J."/>
            <person name="Chan M.M."/>
            <person name="Tang C.C."/>
            <person name="Onodera C.S."/>
            <person name="Deng J.M."/>
            <person name="Akiyama K."/>
            <person name="Ansari Y."/>
            <person name="Arakawa T."/>
            <person name="Banh J."/>
            <person name="Banno F."/>
            <person name="Bowser L."/>
            <person name="Brooks S.Y."/>
            <person name="Carninci P."/>
            <person name="Chao Q."/>
            <person name="Choy N."/>
            <person name="Enju A."/>
            <person name="Goldsmith A.D."/>
            <person name="Gurjal M."/>
            <person name="Hansen N.F."/>
            <person name="Hayashizaki Y."/>
            <person name="Johnson-Hopson C."/>
            <person name="Hsuan V.W."/>
            <person name="Iida K."/>
            <person name="Karnes M."/>
            <person name="Khan S."/>
            <person name="Koesema E."/>
            <person name="Ishida J."/>
            <person name="Jiang P.X."/>
            <person name="Jones T."/>
            <person name="Kawai J."/>
            <person name="Kamiya A."/>
            <person name="Meyers C."/>
            <person name="Nakajima M."/>
            <person name="Narusaka M."/>
            <person name="Seki M."/>
            <person name="Sakurai T."/>
            <person name="Satou M."/>
            <person name="Tamse R."/>
            <person name="Vaysberg M."/>
            <person name="Wallender E.K."/>
            <person name="Wong C."/>
            <person name="Yamamura Y."/>
            <person name="Yuan S."/>
            <person name="Shinozaki K."/>
            <person name="Davis R.W."/>
            <person name="Theologis A."/>
            <person name="Ecker J.R."/>
        </authorList>
    </citation>
    <scope>NUCLEOTIDE SEQUENCE [LARGE SCALE MRNA]</scope>
    <source>
        <strain>cv. Columbia</strain>
    </source>
</reference>
<reference key="4">
    <citation type="submission" date="2002-03" db="EMBL/GenBank/DDBJ databases">
        <title>Full-length cDNA from Arabidopsis thaliana.</title>
        <authorList>
            <person name="Brover V.V."/>
            <person name="Troukhan M.E."/>
            <person name="Alexandrov N.A."/>
            <person name="Lu Y.-P."/>
            <person name="Flavell R.B."/>
            <person name="Feldmann K.A."/>
        </authorList>
    </citation>
    <scope>NUCLEOTIDE SEQUENCE [LARGE SCALE MRNA]</scope>
</reference>
<reference key="5">
    <citation type="journal article" date="2007" name="Trends Plant Sci.">
        <title>The tify family previously known as ZIM.</title>
        <authorList>
            <person name="Vanholme B."/>
            <person name="Grunewald W."/>
            <person name="Bateman A."/>
            <person name="Kohchi T."/>
            <person name="Gheysen G."/>
        </authorList>
    </citation>
    <scope>GENE FAMILY</scope>
    <scope>NOMENCLATURE</scope>
</reference>
<reference key="6">
    <citation type="journal article" date="2010" name="Nature">
        <title>NINJA connects the co-repressor TOPLESS to jasmonate signalling.</title>
        <authorList>
            <person name="Pauwels L."/>
            <person name="Barbero G.F."/>
            <person name="Geerinck J."/>
            <person name="Tilleman S."/>
            <person name="Grunewald W."/>
            <person name="Perez A.C."/>
            <person name="Chico J.M."/>
            <person name="Bossche R.V."/>
            <person name="Sewell J."/>
            <person name="Gil E."/>
            <person name="Garcia-Casado G."/>
            <person name="Witters E."/>
            <person name="Inze D."/>
            <person name="Long J.A."/>
            <person name="De Jaeger G."/>
            <person name="Solano R."/>
            <person name="Goossens A."/>
        </authorList>
    </citation>
    <scope>INTERACTION WITH AFPH2/NINJA</scope>
</reference>
<reference key="7">
    <citation type="journal article" date="2014" name="PLoS ONE">
        <title>The non-JAZ TIFY protein TIFY8 from Arabidopsis thaliana is a transcriptional repressor.</title>
        <authorList>
            <person name="Cuellar Perez A."/>
            <person name="Nagels Durand A."/>
            <person name="Vanden Bossche R."/>
            <person name="De Clercq R."/>
            <person name="Persiau G."/>
            <person name="Van Wees S.C."/>
            <person name="Pieterse C.M."/>
            <person name="Gevaert K."/>
            <person name="De Jaeger G."/>
            <person name="Goossens A."/>
            <person name="Pauwels L."/>
        </authorList>
    </citation>
    <scope>INTERACTION WITH AFPH2/NINJA</scope>
</reference>
<proteinExistence type="evidence at protein level"/>
<name>TIF8_ARATH</name>
<accession>Q84MB2</accession>
<accession>O65542</accession>
<accession>Q8LCS4</accession>
<feature type="chain" id="PRO_0000300650" description="Protein TIFY 8">
    <location>
        <begin position="1"/>
        <end position="361"/>
    </location>
</feature>
<feature type="domain" description="Tify" evidence="3">
    <location>
        <begin position="232"/>
        <end position="267"/>
    </location>
</feature>
<feature type="region of interest" description="Disordered" evidence="4">
    <location>
        <begin position="53"/>
        <end position="78"/>
    </location>
</feature>
<feature type="region of interest" description="Disordered" evidence="4">
    <location>
        <begin position="113"/>
        <end position="134"/>
    </location>
</feature>
<feature type="region of interest" description="Disordered" evidence="4">
    <location>
        <begin position="190"/>
        <end position="232"/>
    </location>
</feature>
<feature type="region of interest" description="Disordered" evidence="4">
    <location>
        <begin position="268"/>
        <end position="361"/>
    </location>
</feature>
<feature type="compositionally biased region" description="Low complexity" evidence="4">
    <location>
        <begin position="56"/>
        <end position="78"/>
    </location>
</feature>
<feature type="compositionally biased region" description="Polar residues" evidence="4">
    <location>
        <begin position="113"/>
        <end position="127"/>
    </location>
</feature>
<feature type="compositionally biased region" description="Polar residues" evidence="4">
    <location>
        <begin position="208"/>
        <end position="232"/>
    </location>
</feature>
<feature type="compositionally biased region" description="Basic and acidic residues" evidence="4">
    <location>
        <begin position="333"/>
        <end position="361"/>
    </location>
</feature>
<sequence>MMVNHNNGQRPTDIDSRLRQTEQDKLLFHDFLGSKNPTLASTSMADHRLPPDNKAAKAAMTPSTASASSAGGLGGLSSTSDLVERHSGGGNHLDGIQLFGPRSDVSGSIMSNRFSGNKRSNSDSHFTTQEHPETLHWSKLLRNGPGSFSMNVNPLANQPPRGGGQISHLLHQLSTSRFKDENVGPSVIAQTAADEGSRTGMKGPGILSSFTMPNSSKLESFAPSNTGNRKDLASSTKQMTIFYGGQAHVFDDVHPNKADVIMALAGSSGGSWSTGLSHKPKSKNNTSDGPYKLGQMYEGGSSKETPQMPPEFRARPSHQPTSSACHRIFTQPGREHQGSIISRGRDIRDPVHRSDPEKEAT</sequence>
<keyword id="KW-1184">Jasmonic acid signaling pathway</keyword>
<keyword id="KW-0539">Nucleus</keyword>
<keyword id="KW-1185">Reference proteome</keyword>
<keyword id="KW-0804">Transcription</keyword>
<keyword id="KW-0805">Transcription regulation</keyword>
<keyword id="KW-0832">Ubl conjugation</keyword>